<comment type="function">
    <text evidence="3">AMP/ATP-binding subunit of AMP-activated protein kinase (AMPK), an energy sensor protein kinase that plays a key role in regulating cellular energy metabolism. In response to reduction of intracellular ATP levels, AMPK activates energy-producing pathways and inhibits energy-consuming processes: inhibits protein, carbohydrate and lipid biosynthesis, as well as cell growth and proliferation. AMPK acts via direct phosphorylation of metabolic enzymes, and by longer-term effects via phosphorylation of transcription regulators. AMPK also acts as a regulator of cellular polarity by remodeling the actin cytoskeleton; probably by indirectly activating myosin. The AMPK gamma3 subunit is a non-catalytic subunit with a regulatory role in muscle energy metabolism. It mediates binding to AMP, ADP and ATP, leading to AMPK activation or inhibition: AMP-binding results in allosteric activation of alpha catalytic subunit (PRKAA1 or PRKAA2) both by inducing phosphorylation and preventing dephosphorylation of catalytic subunits. ADP also stimulates phosphorylation, without stimulating already phosphorylated catalytic subunit. ATP promotes dephosphorylation of catalytic subunit, rendering the AMPK enzyme inactive.</text>
</comment>
<comment type="subunit">
    <text evidence="1">AMPK is a heterotrimer of an alpha catalytic subunit (PRKAA1 or PRKAA2), a beta (PRKAB1 or PRKAB2) and a gamma non-catalytic subunits (PRKAG1, PRKAG2 or PRKAG3). Interacts with FNIP1 and FNIP2 (By similarity).</text>
</comment>
<comment type="alternative products">
    <event type="alternative splicing"/>
    <isoform>
        <id>Q9MYP4-1</id>
        <name>2</name>
        <sequence type="displayed"/>
    </isoform>
    <isoform>
        <id>Q9MYP4-2</id>
        <name>1</name>
        <sequence type="described" ref="VSP_008059"/>
    </isoform>
</comment>
<comment type="tissue specificity">
    <text>Muscle.</text>
</comment>
<comment type="domain">
    <text evidence="1">The AMPK pseudosubstrate motif resembles the sequence around sites phosphorylated on target proteins of AMPK, except the presence of a non-phosphorylatable residue in place of Ser. In the absence of AMP this pseudosubstrate sequence may bind to the active site groove on the alpha subunit (PRKAA1 or PRKAA2), preventing phosphorylation by the upstream activating kinase STK11/LKB1 (By similarity).</text>
</comment>
<comment type="domain">
    <text evidence="2">The 4 CBS domains mediate binding to nucleotides. Of the 4 potential nucleotide-binding sites, 3 are occupied, designated as sites 1, 3, and 4 based on the CBS modules that provide the acidic residue for coordination with the 2'- and 3'-hydroxyl groups of the ribose of AMP. Of these, site 4 appears to be a structural site that retains a tightly held AMP molecule (AMP 3). The 2 remaining sites, 1 and 3, can bind either AMP, ADP or ATP. Site 1 (AMP, ADP or ATP 1) is the high-affinity binding site and likely accommodates AMP or ADP. Site 3 (AMP, ADP or ATP 2) is the weakest nucleotide-binding site on the gamma subunit, yet it is exquisitely sensitive to changes in nucleotide levels and this allows AMPK to respond rapidly to changes in cellular energy status. Site 3 is likely to be responsible for protection of a conserved threonine in the activation loop of the alpha catalytic subunit through conformational changes induced by binding of AMP or ADP.</text>
</comment>
<comment type="PTM">
    <text evidence="3">Phosphorylated by ULK1; leading to negatively regulate AMPK activity and suggesting the existence of a regulatory feedback loop between ULK1 and AMPK.</text>
</comment>
<comment type="PTM">
    <text evidence="3">Glycosylated; O-GlcNAcylated by OGT, promoting the AMP-activated protein kinase (AMPK) activity.</text>
</comment>
<comment type="disease">
    <text evidence="6">Defects in PRKAG3 are the cause of the RN- phenotype which is associated with excess glycogen content (about 70%) in skeletal muscle. This mutation originated in the hampshire breed pigs and has beneficial effects on meat content but detrimental effects on processing yield.</text>
</comment>
<comment type="similarity">
    <text evidence="8">Belongs to the 5'-AMP-activated protein kinase gamma subunit family.</text>
</comment>
<dbReference type="EMBL" id="AF214520">
    <property type="protein sequence ID" value="AAF73988.2"/>
    <property type="molecule type" value="mRNA"/>
</dbReference>
<dbReference type="EMBL" id="AF214521">
    <property type="protein sequence ID" value="AAF73989.1"/>
    <property type="molecule type" value="Genomic_DNA"/>
</dbReference>
<dbReference type="EMBL" id="AY263454">
    <property type="protein sequence ID" value="AAP14907.1"/>
    <property type="molecule type" value="Genomic_DNA"/>
</dbReference>
<dbReference type="EMBL" id="AY264345">
    <property type="protein sequence ID" value="AAP12533.1"/>
    <property type="molecule type" value="mRNA"/>
</dbReference>
<dbReference type="RefSeq" id="NP_999242.1">
    <molecule id="Q9MYP4-1"/>
    <property type="nucleotide sequence ID" value="NM_214077.1"/>
</dbReference>
<dbReference type="SMR" id="Q9MYP4"/>
<dbReference type="FunCoup" id="Q9MYP4">
    <property type="interactions" value="246"/>
</dbReference>
<dbReference type="STRING" id="9823.ENSSSCP00000017163"/>
<dbReference type="GlyGen" id="Q9MYP4">
    <property type="glycosylation" value="1 site"/>
</dbReference>
<dbReference type="PaxDb" id="9823-ENSSSCP00000017163"/>
<dbReference type="PeptideAtlas" id="Q9MYP4"/>
<dbReference type="GeneID" id="397149"/>
<dbReference type="KEGG" id="ssc:397149"/>
<dbReference type="CTD" id="53632"/>
<dbReference type="eggNOG" id="KOG1764">
    <property type="taxonomic scope" value="Eukaryota"/>
</dbReference>
<dbReference type="InParanoid" id="Q9MYP4"/>
<dbReference type="OrthoDB" id="449052at2759"/>
<dbReference type="Proteomes" id="UP000008227">
    <property type="component" value="Unplaced"/>
</dbReference>
<dbReference type="Proteomes" id="UP000314985">
    <property type="component" value="Unplaced"/>
</dbReference>
<dbReference type="Proteomes" id="UP000694570">
    <property type="component" value="Unplaced"/>
</dbReference>
<dbReference type="Proteomes" id="UP000694571">
    <property type="component" value="Unplaced"/>
</dbReference>
<dbReference type="Proteomes" id="UP000694720">
    <property type="component" value="Unplaced"/>
</dbReference>
<dbReference type="Proteomes" id="UP000694722">
    <property type="component" value="Unplaced"/>
</dbReference>
<dbReference type="Proteomes" id="UP000694723">
    <property type="component" value="Unplaced"/>
</dbReference>
<dbReference type="Proteomes" id="UP000694724">
    <property type="component" value="Unplaced"/>
</dbReference>
<dbReference type="Proteomes" id="UP000694725">
    <property type="component" value="Unplaced"/>
</dbReference>
<dbReference type="Proteomes" id="UP000694726">
    <property type="component" value="Unplaced"/>
</dbReference>
<dbReference type="Proteomes" id="UP000694727">
    <property type="component" value="Unplaced"/>
</dbReference>
<dbReference type="Proteomes" id="UP000694728">
    <property type="component" value="Unplaced"/>
</dbReference>
<dbReference type="GO" id="GO:0005737">
    <property type="term" value="C:cytoplasm"/>
    <property type="evidence" value="ECO:0000318"/>
    <property type="project" value="GO_Central"/>
</dbReference>
<dbReference type="GO" id="GO:0005829">
    <property type="term" value="C:cytosol"/>
    <property type="evidence" value="ECO:0007669"/>
    <property type="project" value="UniProtKB-ARBA"/>
</dbReference>
<dbReference type="GO" id="GO:0031588">
    <property type="term" value="C:nucleotide-activated protein kinase complex"/>
    <property type="evidence" value="ECO:0000318"/>
    <property type="project" value="GO_Central"/>
</dbReference>
<dbReference type="GO" id="GO:0005634">
    <property type="term" value="C:nucleus"/>
    <property type="evidence" value="ECO:0000318"/>
    <property type="project" value="GO_Central"/>
</dbReference>
<dbReference type="GO" id="GO:0016208">
    <property type="term" value="F:AMP binding"/>
    <property type="evidence" value="ECO:0000318"/>
    <property type="project" value="GO_Central"/>
</dbReference>
<dbReference type="GO" id="GO:0005524">
    <property type="term" value="F:ATP binding"/>
    <property type="evidence" value="ECO:0007669"/>
    <property type="project" value="UniProtKB-KW"/>
</dbReference>
<dbReference type="GO" id="GO:0019901">
    <property type="term" value="F:protein kinase binding"/>
    <property type="evidence" value="ECO:0000318"/>
    <property type="project" value="GO_Central"/>
</dbReference>
<dbReference type="GO" id="GO:0019887">
    <property type="term" value="F:protein kinase regulator activity"/>
    <property type="evidence" value="ECO:0000250"/>
    <property type="project" value="UniProtKB"/>
</dbReference>
<dbReference type="GO" id="GO:0042149">
    <property type="term" value="P:cellular response to glucose starvation"/>
    <property type="evidence" value="ECO:0000318"/>
    <property type="project" value="GO_Central"/>
</dbReference>
<dbReference type="GO" id="GO:0006633">
    <property type="term" value="P:fatty acid biosynthetic process"/>
    <property type="evidence" value="ECO:0007669"/>
    <property type="project" value="UniProtKB-KW"/>
</dbReference>
<dbReference type="GO" id="GO:0045722">
    <property type="term" value="P:positive regulation of gluconeogenesis"/>
    <property type="evidence" value="ECO:0000318"/>
    <property type="project" value="GO_Central"/>
</dbReference>
<dbReference type="GO" id="GO:0043609">
    <property type="term" value="P:regulation of carbon utilization"/>
    <property type="evidence" value="ECO:0000318"/>
    <property type="project" value="GO_Central"/>
</dbReference>
<dbReference type="GO" id="GO:0006110">
    <property type="term" value="P:regulation of glycolytic process"/>
    <property type="evidence" value="ECO:0000318"/>
    <property type="project" value="GO_Central"/>
</dbReference>
<dbReference type="CDD" id="cd04618">
    <property type="entry name" value="CBS_euAMPK_gamma-like_repeat1"/>
    <property type="match status" value="1"/>
</dbReference>
<dbReference type="CDD" id="cd04641">
    <property type="entry name" value="CBS_euAMPK_gamma-like_repeat2"/>
    <property type="match status" value="1"/>
</dbReference>
<dbReference type="FunFam" id="3.10.580.10:FF:000003">
    <property type="entry name" value="Protein kinase AMP-activated non-catalytic subunit gamma 1"/>
    <property type="match status" value="1"/>
</dbReference>
<dbReference type="FunFam" id="3.10.580.10:FF:000004">
    <property type="entry name" value="Protein kinase AMP-activated non-catalytic subunit gamma 2"/>
    <property type="match status" value="1"/>
</dbReference>
<dbReference type="Gene3D" id="3.10.580.10">
    <property type="entry name" value="CBS-domain"/>
    <property type="match status" value="2"/>
</dbReference>
<dbReference type="InterPro" id="IPR050511">
    <property type="entry name" value="AMPK_gamma/SDS23_families"/>
</dbReference>
<dbReference type="InterPro" id="IPR000644">
    <property type="entry name" value="CBS_dom"/>
</dbReference>
<dbReference type="InterPro" id="IPR046342">
    <property type="entry name" value="CBS_dom_sf"/>
</dbReference>
<dbReference type="PANTHER" id="PTHR13780:SF31">
    <property type="entry name" value="5'-AMP-ACTIVATED PROTEIN KINASE SUBUNIT GAMMA-3"/>
    <property type="match status" value="1"/>
</dbReference>
<dbReference type="PANTHER" id="PTHR13780">
    <property type="entry name" value="AMP-ACTIVATED PROTEIN KINASE, GAMMA REGULATORY SUBUNIT"/>
    <property type="match status" value="1"/>
</dbReference>
<dbReference type="Pfam" id="PF00571">
    <property type="entry name" value="CBS"/>
    <property type="match status" value="3"/>
</dbReference>
<dbReference type="SMART" id="SM00116">
    <property type="entry name" value="CBS"/>
    <property type="match status" value="4"/>
</dbReference>
<dbReference type="SUPFAM" id="SSF54631">
    <property type="entry name" value="CBS-domain pair"/>
    <property type="match status" value="2"/>
</dbReference>
<dbReference type="PROSITE" id="PS51371">
    <property type="entry name" value="CBS"/>
    <property type="match status" value="4"/>
</dbReference>
<name>AAKG3_PIG</name>
<sequence length="514" mass="56790">MELAELEQALRRVPGSRGGWELEQLRPEGRGPTTADTPSWSSLGGPKHQEMSFLEQGESRSWPSRAVTTSSERSHGDQGNKASRWTRQEDVEEGGPPGPREGPQSRPVAESTGQEATFPKATPLAQAAPLAEVDNPPTERDILPSDCAASASDSNTDHLDLGIEFSASAASGDELGLVEEKPAPCPSPEVLLPRLGWDDELQKPGAQVYMHFMQEHTCYDAMATSSKLVIFDTMLEIKKAFFALVANGVRAAPLWDSKKQSFVGMLTITDFILVLHRYYRSPLVQIYEIEEHKIETWREIYLQGCFKPLVSISPNDSLFEAVYALIKNRIHRLPVLDPVSGAVLHILTHKRLLKFLHIFGTLLPRPSFLYRTIQDLGIGTFRDLAVVLETAPILTALDIFVDRRVSALPVVNETGQVVGLYSRFDVIHLAAQQTYNHLDMNVGEALRQRTLCLEGVLSCQPHETLGEVIDRIVREQVHRLVLVDETQHLLGVVSLSDILQALVLSPAGIDALGA</sequence>
<organism>
    <name type="scientific">Sus scrofa</name>
    <name type="common">Pig</name>
    <dbReference type="NCBI Taxonomy" id="9823"/>
    <lineage>
        <taxon>Eukaryota</taxon>
        <taxon>Metazoa</taxon>
        <taxon>Chordata</taxon>
        <taxon>Craniata</taxon>
        <taxon>Vertebrata</taxon>
        <taxon>Euteleostomi</taxon>
        <taxon>Mammalia</taxon>
        <taxon>Eutheria</taxon>
        <taxon>Laurasiatheria</taxon>
        <taxon>Artiodactyla</taxon>
        <taxon>Suina</taxon>
        <taxon>Suidae</taxon>
        <taxon>Sus</taxon>
    </lineage>
</organism>
<accession>Q9MYP4</accession>
<accession>Q53ZT5</accession>
<accession>Q6WZ89</accession>
<reference key="1">
    <citation type="journal article" date="2000" name="Science">
        <title>A mutation in PRKAG3 associated with excess glycogen content in pig skeletal muscle.</title>
        <authorList>
            <person name="Milan D."/>
            <person name="Jeon J.-T."/>
            <person name="Looft C."/>
            <person name="Amarger V."/>
            <person name="Robic A."/>
            <person name="Thelander M."/>
            <person name="Rogel-Gaillard C."/>
            <person name="Paul S."/>
            <person name="Iannuccelli N."/>
            <person name="Rask L."/>
            <person name="Ronne H."/>
            <person name="Lundstroem K."/>
            <person name="Reinsch N."/>
            <person name="Gellin J."/>
            <person name="Kalm E."/>
            <person name="Le Roy P."/>
            <person name="Chardon P."/>
            <person name="Andersson L."/>
        </authorList>
    </citation>
    <scope>NUCLEOTIDE SEQUENCE [GENOMIC DNA / MRNA] (ISOFORM 1)</scope>
    <scope>INVOLVEMENT IN RN(-)</scope>
    <scope>VARIANT RN(-) GLN-250</scope>
    <source>
        <tissue>Skeletal muscle</tissue>
    </source>
</reference>
<reference key="2">
    <citation type="submission" date="2003-04" db="EMBL/GenBank/DDBJ databases">
        <authorList>
            <person name="Milan D."/>
            <person name="Jeon J.-T."/>
            <person name="Looft C."/>
            <person name="Amarger V."/>
            <person name="Robic A."/>
            <person name="Rogel-Gaillard C."/>
            <person name="Paul S."/>
            <person name="Gellin J."/>
            <person name="Lundstroem K."/>
            <person name="Reinsch N."/>
            <person name="Kalm E."/>
            <person name="Le Roy P."/>
            <person name="Chardon P."/>
            <person name="Andersson L."/>
        </authorList>
    </citation>
    <scope>NUCLEOTIDE SEQUENCE (ISOFORM 2)</scope>
    <source>
        <tissue>Skeletal muscle</tissue>
    </source>
</reference>
<reference key="3">
    <citation type="journal article" date="2003" name="Cytogenet. Genome Res.">
        <title>Comparative sequence analysis of the PRKAG3 region between human and pig: evolution of repetitive sequences and potential new exons.</title>
        <authorList>
            <person name="Amarger V."/>
            <person name="Erlandsson R."/>
            <person name="Pielberg G."/>
            <person name="Jeon J.-T."/>
            <person name="Andersson L."/>
        </authorList>
    </citation>
    <scope>NUCLEOTIDE SEQUENCE [GENOMIC DNA / MRNA]</scope>
</reference>
<proteinExistence type="evidence at protein level"/>
<gene>
    <name type="primary">PRKAG3</name>
</gene>
<keyword id="KW-0025">Alternative splicing</keyword>
<keyword id="KW-0067">ATP-binding</keyword>
<keyword id="KW-0129">CBS domain</keyword>
<keyword id="KW-0225">Disease variant</keyword>
<keyword id="KW-0275">Fatty acid biosynthesis</keyword>
<keyword id="KW-0276">Fatty acid metabolism</keyword>
<keyword id="KW-0325">Glycoprotein</keyword>
<keyword id="KW-0444">Lipid biosynthesis</keyword>
<keyword id="KW-0443">Lipid metabolism</keyword>
<keyword id="KW-0547">Nucleotide-binding</keyword>
<keyword id="KW-0597">Phosphoprotein</keyword>
<keyword id="KW-1185">Reference proteome</keyword>
<keyword id="KW-0677">Repeat</keyword>
<feature type="chain" id="PRO_0000204386" description="5'-AMP-activated protein kinase subunit gamma-3">
    <location>
        <begin position="1"/>
        <end position="514"/>
    </location>
</feature>
<feature type="domain" description="CBS 1" evidence="4">
    <location>
        <begin position="222"/>
        <end position="283"/>
    </location>
</feature>
<feature type="domain" description="CBS 2" evidence="4">
    <location>
        <begin position="305"/>
        <end position="363"/>
    </location>
</feature>
<feature type="domain" description="CBS 3" evidence="4">
    <location>
        <begin position="380"/>
        <end position="440"/>
    </location>
</feature>
<feature type="domain" description="CBS 4" evidence="4">
    <location>
        <begin position="452"/>
        <end position="511"/>
    </location>
</feature>
<feature type="region of interest" description="Disordered" evidence="5">
    <location>
        <begin position="1"/>
        <end position="121"/>
    </location>
</feature>
<feature type="region of interest" description="Disordered" evidence="5">
    <location>
        <begin position="134"/>
        <end position="155"/>
    </location>
</feature>
<feature type="short sequence motif" description="AMPK pseudosubstrate">
    <location>
        <begin position="318"/>
        <end position="339"/>
    </location>
</feature>
<feature type="compositionally biased region" description="Polar residues" evidence="5">
    <location>
        <begin position="59"/>
        <end position="71"/>
    </location>
</feature>
<feature type="binding site" evidence="2">
    <location>
        <position position="250"/>
    </location>
    <ligand>
        <name>ADP</name>
        <dbReference type="ChEBI" id="CHEBI:456216"/>
        <label>2</label>
    </ligand>
</feature>
<feature type="binding site" evidence="2">
    <location>
        <position position="250"/>
    </location>
    <ligand>
        <name>AMP</name>
        <dbReference type="ChEBI" id="CHEBI:456215"/>
        <label>2</label>
    </ligand>
</feature>
<feature type="binding site" evidence="2">
    <location>
        <position position="250"/>
    </location>
    <ligand>
        <name>ATP</name>
        <dbReference type="ChEBI" id="CHEBI:30616"/>
        <label>1</label>
    </ligand>
</feature>
<feature type="binding site" evidence="2">
    <location>
        <position position="250"/>
    </location>
    <ligand>
        <name>ATP</name>
        <dbReference type="ChEBI" id="CHEBI:30616"/>
        <label>2</label>
    </ligand>
</feature>
<feature type="binding site" evidence="2">
    <location>
        <begin position="265"/>
        <end position="270"/>
    </location>
    <ligand>
        <name>ADP</name>
        <dbReference type="ChEBI" id="CHEBI:456216"/>
        <label>1</label>
    </ligand>
</feature>
<feature type="binding site" evidence="2">
    <location>
        <begin position="265"/>
        <end position="270"/>
    </location>
    <ligand>
        <name>AMP</name>
        <dbReference type="ChEBI" id="CHEBI:456215"/>
        <label>1</label>
    </ligand>
</feature>
<feature type="binding site" evidence="2">
    <location>
        <begin position="265"/>
        <end position="270"/>
    </location>
    <ligand>
        <name>ATP</name>
        <dbReference type="ChEBI" id="CHEBI:30616"/>
        <label>1</label>
    </ligand>
</feature>
<feature type="binding site" evidence="2">
    <location>
        <position position="310"/>
    </location>
    <ligand>
        <name>ADP</name>
        <dbReference type="ChEBI" id="CHEBI:456216"/>
        <label>1</label>
    </ligand>
</feature>
<feature type="binding site" evidence="2">
    <location>
        <position position="310"/>
    </location>
    <ligand>
        <name>AMP</name>
        <dbReference type="ChEBI" id="CHEBI:456215"/>
        <label>1</label>
    </ligand>
</feature>
<feature type="binding site" evidence="2">
    <location>
        <position position="310"/>
    </location>
    <ligand>
        <name>ATP</name>
        <dbReference type="ChEBI" id="CHEBI:30616"/>
        <label>1</label>
    </ligand>
</feature>
<feature type="binding site" evidence="2">
    <location>
        <begin position="331"/>
        <end position="332"/>
    </location>
    <ligand>
        <name>ADP</name>
        <dbReference type="ChEBI" id="CHEBI:456216"/>
        <label>1</label>
    </ligand>
</feature>
<feature type="binding site" evidence="2">
    <location>
        <begin position="331"/>
        <end position="332"/>
    </location>
    <ligand>
        <name>AMP</name>
        <dbReference type="ChEBI" id="CHEBI:456215"/>
        <label>1</label>
    </ligand>
</feature>
<feature type="binding site" evidence="2">
    <location>
        <begin position="331"/>
        <end position="332"/>
    </location>
    <ligand>
        <name>ATP</name>
        <dbReference type="ChEBI" id="CHEBI:30616"/>
        <label>1</label>
    </ligand>
</feature>
<feature type="binding site" evidence="2">
    <location>
        <position position="331"/>
    </location>
    <ligand>
        <name>AMP</name>
        <dbReference type="ChEBI" id="CHEBI:456215"/>
        <label>3</label>
    </ligand>
</feature>
<feature type="binding site" evidence="2">
    <location>
        <position position="332"/>
    </location>
    <ligand>
        <name>ATP</name>
        <dbReference type="ChEBI" id="CHEBI:30616"/>
        <label>2</label>
    </ligand>
</feature>
<feature type="binding site" evidence="2">
    <location>
        <position position="350"/>
    </location>
    <ligand>
        <name>ADP</name>
        <dbReference type="ChEBI" id="CHEBI:456216"/>
        <label>2</label>
    </ligand>
</feature>
<feature type="binding site" evidence="2">
    <location>
        <position position="350"/>
    </location>
    <ligand>
        <name>AMP</name>
        <dbReference type="ChEBI" id="CHEBI:456215"/>
        <label>2</label>
    </ligand>
</feature>
<feature type="binding site" evidence="2">
    <location>
        <position position="350"/>
    </location>
    <ligand>
        <name>ATP</name>
        <dbReference type="ChEBI" id="CHEBI:30616"/>
        <label>2</label>
    </ligand>
</feature>
<feature type="binding site" evidence="2">
    <location>
        <position position="380"/>
    </location>
    <ligand>
        <name>AMP</name>
        <dbReference type="ChEBI" id="CHEBI:456215"/>
        <label>3</label>
    </ligand>
</feature>
<feature type="binding site" evidence="2">
    <location>
        <position position="385"/>
    </location>
    <ligand>
        <name>AMP</name>
        <dbReference type="ChEBI" id="CHEBI:456215"/>
        <label>3</label>
    </ligand>
</feature>
<feature type="binding site" evidence="2">
    <location>
        <begin position="406"/>
        <end position="407"/>
    </location>
    <ligand>
        <name>AMP</name>
        <dbReference type="ChEBI" id="CHEBI:456215"/>
        <label>3</label>
    </ligand>
</feature>
<feature type="binding site" evidence="2">
    <location>
        <begin position="422"/>
        <end position="425"/>
    </location>
    <ligand>
        <name>ADP</name>
        <dbReference type="ChEBI" id="CHEBI:456216"/>
        <label>2</label>
    </ligand>
</feature>
<feature type="binding site" evidence="2">
    <location>
        <begin position="422"/>
        <end position="425"/>
    </location>
    <ligand>
        <name>AMP</name>
        <dbReference type="ChEBI" id="CHEBI:456215"/>
        <label>2</label>
    </ligand>
</feature>
<feature type="binding site" evidence="2">
    <location>
        <begin position="422"/>
        <end position="425"/>
    </location>
    <ligand>
        <name>ATP</name>
        <dbReference type="ChEBI" id="CHEBI:30616"/>
        <label>2</label>
    </ligand>
</feature>
<feature type="binding site" evidence="2">
    <location>
        <position position="449"/>
    </location>
    <ligand>
        <name>ADP</name>
        <dbReference type="ChEBI" id="CHEBI:456216"/>
        <label>2</label>
    </ligand>
</feature>
<feature type="binding site" evidence="2">
    <location>
        <position position="449"/>
    </location>
    <ligand>
        <name>AMP</name>
        <dbReference type="ChEBI" id="CHEBI:456215"/>
        <label>2</label>
    </ligand>
</feature>
<feature type="binding site" evidence="2">
    <location>
        <position position="449"/>
    </location>
    <ligand>
        <name>ATP</name>
        <dbReference type="ChEBI" id="CHEBI:30616"/>
        <label>2</label>
    </ligand>
</feature>
<feature type="binding site" evidence="2">
    <location>
        <position position="457"/>
    </location>
    <ligand>
        <name>ADP</name>
        <dbReference type="ChEBI" id="CHEBI:456216"/>
        <label>2</label>
    </ligand>
</feature>
<feature type="binding site" evidence="2">
    <location>
        <position position="457"/>
    </location>
    <ligand>
        <name>AMP</name>
        <dbReference type="ChEBI" id="CHEBI:456215"/>
        <label>2</label>
    </ligand>
</feature>
<feature type="binding site" evidence="2">
    <location>
        <position position="457"/>
    </location>
    <ligand>
        <name>ATP</name>
        <dbReference type="ChEBI" id="CHEBI:30616"/>
        <label>2</label>
    </ligand>
</feature>
<feature type="binding site" evidence="2">
    <location>
        <begin position="478"/>
        <end position="479"/>
    </location>
    <ligand>
        <name>ADP</name>
        <dbReference type="ChEBI" id="CHEBI:456216"/>
        <label>2</label>
    </ligand>
</feature>
<feature type="binding site" evidence="2">
    <location>
        <begin position="478"/>
        <end position="479"/>
    </location>
    <ligand>
        <name>AMP</name>
        <dbReference type="ChEBI" id="CHEBI:456215"/>
        <label>2</label>
    </ligand>
</feature>
<feature type="binding site" evidence="2">
    <location>
        <begin position="478"/>
        <end position="479"/>
    </location>
    <ligand>
        <name>ATP</name>
        <dbReference type="ChEBI" id="CHEBI:30616"/>
        <label>2</label>
    </ligand>
</feature>
<feature type="binding site" evidence="2">
    <location>
        <position position="478"/>
    </location>
    <ligand>
        <name>AMP</name>
        <dbReference type="ChEBI" id="CHEBI:456215"/>
        <label>3</label>
    </ligand>
</feature>
<feature type="binding site" evidence="2">
    <location>
        <begin position="494"/>
        <end position="497"/>
    </location>
    <ligand>
        <name>AMP</name>
        <dbReference type="ChEBI" id="CHEBI:456215"/>
        <label>3</label>
    </ligand>
</feature>
<feature type="splice variant" id="VSP_008059" description="In isoform 1." evidence="7">
    <location>
        <begin position="1"/>
        <end position="50"/>
    </location>
</feature>
<feature type="sequence variant" description="In RN-." evidence="6">
    <original>R</original>
    <variation>Q</variation>
    <location>
        <position position="250"/>
    </location>
</feature>
<feature type="sequence conflict" description="In Ref. 3; AAP14907." evidence="8" ref="3">
    <original>V</original>
    <variation>E</variation>
    <location>
        <position position="418"/>
    </location>
</feature>
<feature type="sequence conflict" description="In Ref. 3; AAP14907." evidence="8" ref="3">
    <original>N</original>
    <variation>S</variation>
    <location>
        <position position="441"/>
    </location>
</feature>
<protein>
    <recommendedName>
        <fullName>5'-AMP-activated protein kinase subunit gamma-3</fullName>
        <shortName>AMPK gamma3</shortName>
        <shortName>AMPK subunit gamma-3</shortName>
    </recommendedName>
</protein>
<evidence type="ECO:0000250" key="1"/>
<evidence type="ECO:0000250" key="2">
    <source>
        <dbReference type="UniProtKB" id="P80385"/>
    </source>
</evidence>
<evidence type="ECO:0000250" key="3">
    <source>
        <dbReference type="UniProtKB" id="Q9UGI9"/>
    </source>
</evidence>
<evidence type="ECO:0000255" key="4">
    <source>
        <dbReference type="PROSITE-ProRule" id="PRU00703"/>
    </source>
</evidence>
<evidence type="ECO:0000256" key="5">
    <source>
        <dbReference type="SAM" id="MobiDB-lite"/>
    </source>
</evidence>
<evidence type="ECO:0000269" key="6">
    <source>
    </source>
</evidence>
<evidence type="ECO:0000303" key="7">
    <source>
    </source>
</evidence>
<evidence type="ECO:0000305" key="8"/>